<keyword id="KW-0032">Aminotransferase</keyword>
<keyword id="KW-0663">Pyridoxal phosphate</keyword>
<keyword id="KW-0808">Transferase</keyword>
<proteinExistence type="inferred from homology"/>
<gene>
    <name evidence="1" type="primary">patA</name>
    <name type="ordered locus">EFER_3025</name>
</gene>
<comment type="function">
    <text evidence="1">Catalyzes the aminotransferase reaction from putrescine to 2-oxoglutarate, leading to glutamate and 4-aminobutanal, which spontaneously cyclizes to form 1-pyrroline. This is the first step in one of two pathways for putrescine degradation, where putrescine is converted into 4-aminobutanoate (gamma-aminobutyrate or GABA) via 4-aminobutanal. Also functions as a cadaverine transaminase in a a L-lysine degradation pathway to succinate that proceeds via cadaverine, glutarate and L-2-hydroxyglutarate.</text>
</comment>
<comment type="catalytic activity">
    <reaction evidence="1">
        <text>an alkane-alpha,omega-diamine + 2-oxoglutarate = an omega-aminoaldehyde + L-glutamate</text>
        <dbReference type="Rhea" id="RHEA:18217"/>
        <dbReference type="Rhea" id="RHEA-COMP:9766"/>
        <dbReference type="Rhea" id="RHEA-COMP:12750"/>
        <dbReference type="ChEBI" id="CHEBI:16810"/>
        <dbReference type="ChEBI" id="CHEBI:29985"/>
        <dbReference type="ChEBI" id="CHEBI:70977"/>
        <dbReference type="ChEBI" id="CHEBI:133427"/>
        <dbReference type="EC" id="2.6.1.29"/>
    </reaction>
    <physiologicalReaction direction="left-to-right" evidence="1">
        <dbReference type="Rhea" id="RHEA:18218"/>
    </physiologicalReaction>
</comment>
<comment type="catalytic activity">
    <reaction evidence="1">
        <text>putrescine + 2-oxoglutarate = 1-pyrroline + L-glutamate + H2O</text>
        <dbReference type="Rhea" id="RHEA:12268"/>
        <dbReference type="ChEBI" id="CHEBI:15377"/>
        <dbReference type="ChEBI" id="CHEBI:16810"/>
        <dbReference type="ChEBI" id="CHEBI:29985"/>
        <dbReference type="ChEBI" id="CHEBI:36781"/>
        <dbReference type="ChEBI" id="CHEBI:326268"/>
        <dbReference type="EC" id="2.6.1.82"/>
    </reaction>
    <physiologicalReaction direction="left-to-right" evidence="1">
        <dbReference type="Rhea" id="RHEA:12269"/>
    </physiologicalReaction>
</comment>
<comment type="catalytic activity">
    <reaction evidence="1">
        <text>cadaverine + 2-oxoglutarate = 5-aminopentanal + L-glutamate</text>
        <dbReference type="Rhea" id="RHEA:61624"/>
        <dbReference type="ChEBI" id="CHEBI:16810"/>
        <dbReference type="ChEBI" id="CHEBI:29985"/>
        <dbReference type="ChEBI" id="CHEBI:58384"/>
        <dbReference type="ChEBI" id="CHEBI:144896"/>
    </reaction>
    <physiologicalReaction direction="left-to-right" evidence="1">
        <dbReference type="Rhea" id="RHEA:61625"/>
    </physiologicalReaction>
</comment>
<comment type="cofactor">
    <cofactor evidence="1">
        <name>pyridoxal 5'-phosphate</name>
        <dbReference type="ChEBI" id="CHEBI:597326"/>
    </cofactor>
</comment>
<comment type="pathway">
    <text evidence="1">Amine and polyamine degradation; putrescine degradation; 4-aminobutanal from putrescine (transaminase route): step 1/1.</text>
</comment>
<comment type="similarity">
    <text evidence="1">Belongs to the class-III pyridoxal-phosphate-dependent aminotransferase family. Putrescine aminotransferase subfamily.</text>
</comment>
<comment type="sequence caution" evidence="2">
    <conflict type="erroneous initiation">
        <sequence resource="EMBL-CDS" id="CAQ90518"/>
    </conflict>
</comment>
<reference key="1">
    <citation type="journal article" date="2009" name="PLoS Genet.">
        <title>Organised genome dynamics in the Escherichia coli species results in highly diverse adaptive paths.</title>
        <authorList>
            <person name="Touchon M."/>
            <person name="Hoede C."/>
            <person name="Tenaillon O."/>
            <person name="Barbe V."/>
            <person name="Baeriswyl S."/>
            <person name="Bidet P."/>
            <person name="Bingen E."/>
            <person name="Bonacorsi S."/>
            <person name="Bouchier C."/>
            <person name="Bouvet O."/>
            <person name="Calteau A."/>
            <person name="Chiapello H."/>
            <person name="Clermont O."/>
            <person name="Cruveiller S."/>
            <person name="Danchin A."/>
            <person name="Diard M."/>
            <person name="Dossat C."/>
            <person name="Karoui M.E."/>
            <person name="Frapy E."/>
            <person name="Garry L."/>
            <person name="Ghigo J.M."/>
            <person name="Gilles A.M."/>
            <person name="Johnson J."/>
            <person name="Le Bouguenec C."/>
            <person name="Lescat M."/>
            <person name="Mangenot S."/>
            <person name="Martinez-Jehanne V."/>
            <person name="Matic I."/>
            <person name="Nassif X."/>
            <person name="Oztas S."/>
            <person name="Petit M.A."/>
            <person name="Pichon C."/>
            <person name="Rouy Z."/>
            <person name="Ruf C.S."/>
            <person name="Schneider D."/>
            <person name="Tourret J."/>
            <person name="Vacherie B."/>
            <person name="Vallenet D."/>
            <person name="Medigue C."/>
            <person name="Rocha E.P.C."/>
            <person name="Denamur E."/>
        </authorList>
    </citation>
    <scope>NUCLEOTIDE SEQUENCE [LARGE SCALE GENOMIC DNA]</scope>
    <source>
        <strain>ATCC 35469 / DSM 13698 / BCRC 15582 / CCUG 18766 / IAM 14443 / JCM 21226 / LMG 7866 / NBRC 102419 / NCTC 12128 / CDC 0568-73</strain>
    </source>
</reference>
<protein>
    <recommendedName>
        <fullName evidence="1">Putrescine aminotransferase</fullName>
        <shortName evidence="1">PAT</shortName>
        <shortName evidence="1">PATase</shortName>
        <ecNumber evidence="1">2.6.1.82</ecNumber>
    </recommendedName>
    <alternativeName>
        <fullName evidence="1">Cadaverine transaminase</fullName>
    </alternativeName>
    <alternativeName>
        <fullName evidence="1">Diamine transaminase</fullName>
        <ecNumber evidence="1">2.6.1.29</ecNumber>
    </alternativeName>
    <alternativeName>
        <fullName evidence="1">Putrescine transaminase</fullName>
    </alternativeName>
    <alternativeName>
        <fullName evidence="1">Putrescine--2-oxoglutaric acid transaminase</fullName>
    </alternativeName>
</protein>
<accession>B7LQF8</accession>
<dbReference type="EC" id="2.6.1.82" evidence="1"/>
<dbReference type="EC" id="2.6.1.29" evidence="1"/>
<dbReference type="EMBL" id="CU928158">
    <property type="protein sequence ID" value="CAQ90518.1"/>
    <property type="status" value="ALT_INIT"/>
    <property type="molecule type" value="Genomic_DNA"/>
</dbReference>
<dbReference type="SMR" id="B7LQF8"/>
<dbReference type="KEGG" id="efe:EFER_3025"/>
<dbReference type="HOGENOM" id="CLU_016922_10_0_6"/>
<dbReference type="OrthoDB" id="9801052at2"/>
<dbReference type="UniPathway" id="UPA00188">
    <property type="reaction ID" value="UER00290"/>
</dbReference>
<dbReference type="Proteomes" id="UP000000745">
    <property type="component" value="Chromosome"/>
</dbReference>
<dbReference type="GO" id="GO:0019161">
    <property type="term" value="F:diamine transaminase activity"/>
    <property type="evidence" value="ECO:0007669"/>
    <property type="project" value="UniProtKB-EC"/>
</dbReference>
<dbReference type="GO" id="GO:0042802">
    <property type="term" value="F:identical protein binding"/>
    <property type="evidence" value="ECO:0007669"/>
    <property type="project" value="TreeGrafter"/>
</dbReference>
<dbReference type="GO" id="GO:0033094">
    <property type="term" value="F:putrescine--2-oxoglutarate transaminase activity"/>
    <property type="evidence" value="ECO:0007669"/>
    <property type="project" value="UniProtKB-UniRule"/>
</dbReference>
<dbReference type="GO" id="GO:0030170">
    <property type="term" value="F:pyridoxal phosphate binding"/>
    <property type="evidence" value="ECO:0007669"/>
    <property type="project" value="UniProtKB-UniRule"/>
</dbReference>
<dbReference type="GO" id="GO:0019477">
    <property type="term" value="P:L-lysine catabolic process"/>
    <property type="evidence" value="ECO:0007669"/>
    <property type="project" value="UniProtKB-UniRule"/>
</dbReference>
<dbReference type="GO" id="GO:0009447">
    <property type="term" value="P:putrescine catabolic process"/>
    <property type="evidence" value="ECO:0007669"/>
    <property type="project" value="UniProtKB-UniRule"/>
</dbReference>
<dbReference type="CDD" id="cd00610">
    <property type="entry name" value="OAT_like"/>
    <property type="match status" value="1"/>
</dbReference>
<dbReference type="FunFam" id="3.40.640.10:FF:000004">
    <property type="entry name" value="Acetylornithine aminotransferase"/>
    <property type="match status" value="1"/>
</dbReference>
<dbReference type="Gene3D" id="3.90.1150.10">
    <property type="entry name" value="Aspartate Aminotransferase, domain 1"/>
    <property type="match status" value="1"/>
</dbReference>
<dbReference type="Gene3D" id="3.40.640.10">
    <property type="entry name" value="Type I PLP-dependent aspartate aminotransferase-like (Major domain)"/>
    <property type="match status" value="1"/>
</dbReference>
<dbReference type="HAMAP" id="MF_01276">
    <property type="entry name" value="Putres_aminotrans_3"/>
    <property type="match status" value="1"/>
</dbReference>
<dbReference type="InterPro" id="IPR005814">
    <property type="entry name" value="Aminotrans_3"/>
</dbReference>
<dbReference type="InterPro" id="IPR049704">
    <property type="entry name" value="Aminotrans_3_PPA_site"/>
</dbReference>
<dbReference type="InterPro" id="IPR050103">
    <property type="entry name" value="Class-III_PLP-dep_AT"/>
</dbReference>
<dbReference type="InterPro" id="IPR017747">
    <property type="entry name" value="Putrescine_aminotransferase"/>
</dbReference>
<dbReference type="InterPro" id="IPR015424">
    <property type="entry name" value="PyrdxlP-dep_Trfase"/>
</dbReference>
<dbReference type="InterPro" id="IPR015421">
    <property type="entry name" value="PyrdxlP-dep_Trfase_major"/>
</dbReference>
<dbReference type="InterPro" id="IPR015422">
    <property type="entry name" value="PyrdxlP-dep_Trfase_small"/>
</dbReference>
<dbReference type="NCBIfam" id="NF008570">
    <property type="entry name" value="PRK11522.1"/>
    <property type="match status" value="1"/>
</dbReference>
<dbReference type="NCBIfam" id="TIGR03372">
    <property type="entry name" value="putres_am_tran"/>
    <property type="match status" value="1"/>
</dbReference>
<dbReference type="PANTHER" id="PTHR11986">
    <property type="entry name" value="AMINOTRANSFERASE CLASS III"/>
    <property type="match status" value="1"/>
</dbReference>
<dbReference type="PANTHER" id="PTHR11986:SF112">
    <property type="entry name" value="PUTRESCINE AMINOTRANSFERASE"/>
    <property type="match status" value="1"/>
</dbReference>
<dbReference type="Pfam" id="PF00202">
    <property type="entry name" value="Aminotran_3"/>
    <property type="match status" value="1"/>
</dbReference>
<dbReference type="PIRSF" id="PIRSF000521">
    <property type="entry name" value="Transaminase_4ab_Lys_Orn"/>
    <property type="match status" value="1"/>
</dbReference>
<dbReference type="SUPFAM" id="SSF53383">
    <property type="entry name" value="PLP-dependent transferases"/>
    <property type="match status" value="1"/>
</dbReference>
<dbReference type="PROSITE" id="PS00600">
    <property type="entry name" value="AA_TRANSFER_CLASS_3"/>
    <property type="match status" value="1"/>
</dbReference>
<evidence type="ECO:0000255" key="1">
    <source>
        <dbReference type="HAMAP-Rule" id="MF_01276"/>
    </source>
</evidence>
<evidence type="ECO:0000305" key="2"/>
<name>PAT_ESCF3</name>
<organism>
    <name type="scientific">Escherichia fergusonii (strain ATCC 35469 / DSM 13698 / CCUG 18766 / IAM 14443 / JCM 21226 / LMG 7866 / NBRC 102419 / NCTC 12128 / CDC 0568-73)</name>
    <dbReference type="NCBI Taxonomy" id="585054"/>
    <lineage>
        <taxon>Bacteria</taxon>
        <taxon>Pseudomonadati</taxon>
        <taxon>Pseudomonadota</taxon>
        <taxon>Gammaproteobacteria</taxon>
        <taxon>Enterobacterales</taxon>
        <taxon>Enterobacteriaceae</taxon>
        <taxon>Escherichia</taxon>
    </lineage>
</organism>
<sequence>MNRLPSSASALACSAHALNLIEKQTLDHEEMKALNREVIEYFKEHVNPGFLEYRKSVTAGGDYGAVEWQAGGLNTLVDTQGQEFIDCLGGFGIFNVGHRNPVVVSAVQNQLAKQPLHSQELLDPLRAMLAKTLAALTPGKLKYSFFCNSGTESVEAALKLAKAYQSPRGKFTFIATSGAFHGKSLGALSATAKSTFRKPFMPLLPGFRHVPFGHIEAMRTALSECKKTGDDVAAVILEPIQGEGGVILPPPGYLTAVRKLCDEFGALMILDEVQTGMGRTGKMFACEHENVQPDILCLAKALGGGVMPIGATIATEEVFSVLFDNPFLHTTTFGGNPLACAAALATINVLLEQNLPAQAEQKGDMLLDGFRQLAREYPDLVQEARGKGMLMAIEFVDNEIGYNFASEMFRQRVLVAGTLNNAKTIRIEPPLTLTIEQCELVIKAARKALAAMRVSVEEA</sequence>
<feature type="chain" id="PRO_0000379559" description="Putrescine aminotransferase">
    <location>
        <begin position="1"/>
        <end position="459"/>
    </location>
</feature>
<feature type="binding site" description="in other chain" evidence="1">
    <location>
        <begin position="150"/>
        <end position="151"/>
    </location>
    <ligand>
        <name>pyridoxal 5'-phosphate</name>
        <dbReference type="ChEBI" id="CHEBI:597326"/>
        <note>ligand shared between dimeric partners</note>
    </ligand>
</feature>
<feature type="binding site" description="in other chain" evidence="1">
    <location>
        <position position="274"/>
    </location>
    <ligand>
        <name>pyridoxal 5'-phosphate</name>
        <dbReference type="ChEBI" id="CHEBI:597326"/>
        <note>ligand shared between dimeric partners</note>
    </ligand>
</feature>
<feature type="binding site" evidence="1">
    <location>
        <position position="332"/>
    </location>
    <ligand>
        <name>pyridoxal 5'-phosphate</name>
        <dbReference type="ChEBI" id="CHEBI:597326"/>
        <note>ligand shared between dimeric partners</note>
    </ligand>
</feature>
<feature type="modified residue" description="N6-(pyridoxal phosphate)lysine" evidence="1">
    <location>
        <position position="300"/>
    </location>
</feature>